<sequence length="389" mass="43732">MASLYLNSLLPLPPSHPQKLLEPSSSSLLSTSNGNELALKPIVINGDPPTFVSAPARRIVAVGDLHGDLGKARDALQLAGVLSSDGRDQWVGQDTVLVQVGDILDRGDDEIAILSLLRSLDDQAKANGGAVFQVNGNHETMNVEGDFRYVDARAFDECTDFLDYLEDYAQDWDKAFRNWIFESRQWKEDRRSSQTYWDQWNVVKRQKGVIARSVLLRPGGRLACELSRHGVILRVNNWLFCHGGLLPHHVAYGIERINREVSTWMRSPTNYEDSPQMPFIATRGYDSVVWSRLYSRETSELEDYQIEQVNKILHDTLEAVGAKAMVVGHTPQLSGVNCEYGCGIWRVDVGMSSGVLDSRPEVLEIRGDKARVIRSNRDRLHELQVADYI</sequence>
<accession>Q8L774</accession>
<accession>Q8RY10</accession>
<accession>Q9LMJ5</accession>
<protein>
    <recommendedName>
        <fullName evidence="4">Shewanella-like protein phosphatase 1</fullName>
        <shortName evidence="4">AtSLP1</shortName>
        <ecNumber evidence="5">3.1.-.-</ecNumber>
    </recommendedName>
</protein>
<gene>
    <name evidence="4" type="primary">SLP1</name>
    <name evidence="7" type="ordered locus">At1g07010</name>
    <name evidence="8" type="ORF">F10K1.27</name>
</gene>
<reference key="1">
    <citation type="journal article" date="2000" name="Nature">
        <title>Sequence and analysis of chromosome 1 of the plant Arabidopsis thaliana.</title>
        <authorList>
            <person name="Theologis A."/>
            <person name="Ecker J.R."/>
            <person name="Palm C.J."/>
            <person name="Federspiel N.A."/>
            <person name="Kaul S."/>
            <person name="White O."/>
            <person name="Alonso J."/>
            <person name="Altafi H."/>
            <person name="Araujo R."/>
            <person name="Bowman C.L."/>
            <person name="Brooks S.Y."/>
            <person name="Buehler E."/>
            <person name="Chan A."/>
            <person name="Chao Q."/>
            <person name="Chen H."/>
            <person name="Cheuk R.F."/>
            <person name="Chin C.W."/>
            <person name="Chung M.K."/>
            <person name="Conn L."/>
            <person name="Conway A.B."/>
            <person name="Conway A.R."/>
            <person name="Creasy T.H."/>
            <person name="Dewar K."/>
            <person name="Dunn P."/>
            <person name="Etgu P."/>
            <person name="Feldblyum T.V."/>
            <person name="Feng J.-D."/>
            <person name="Fong B."/>
            <person name="Fujii C.Y."/>
            <person name="Gill J.E."/>
            <person name="Goldsmith A.D."/>
            <person name="Haas B."/>
            <person name="Hansen N.F."/>
            <person name="Hughes B."/>
            <person name="Huizar L."/>
            <person name="Hunter J.L."/>
            <person name="Jenkins J."/>
            <person name="Johnson-Hopson C."/>
            <person name="Khan S."/>
            <person name="Khaykin E."/>
            <person name="Kim C.J."/>
            <person name="Koo H.L."/>
            <person name="Kremenetskaia I."/>
            <person name="Kurtz D.B."/>
            <person name="Kwan A."/>
            <person name="Lam B."/>
            <person name="Langin-Hooper S."/>
            <person name="Lee A."/>
            <person name="Lee J.M."/>
            <person name="Lenz C.A."/>
            <person name="Li J.H."/>
            <person name="Li Y.-P."/>
            <person name="Lin X."/>
            <person name="Liu S.X."/>
            <person name="Liu Z.A."/>
            <person name="Luros J.S."/>
            <person name="Maiti R."/>
            <person name="Marziali A."/>
            <person name="Militscher J."/>
            <person name="Miranda M."/>
            <person name="Nguyen M."/>
            <person name="Nierman W.C."/>
            <person name="Osborne B.I."/>
            <person name="Pai G."/>
            <person name="Peterson J."/>
            <person name="Pham P.K."/>
            <person name="Rizzo M."/>
            <person name="Rooney T."/>
            <person name="Rowley D."/>
            <person name="Sakano H."/>
            <person name="Salzberg S.L."/>
            <person name="Schwartz J.R."/>
            <person name="Shinn P."/>
            <person name="Southwick A.M."/>
            <person name="Sun H."/>
            <person name="Tallon L.J."/>
            <person name="Tambunga G."/>
            <person name="Toriumi M.J."/>
            <person name="Town C.D."/>
            <person name="Utterback T."/>
            <person name="Van Aken S."/>
            <person name="Vaysberg M."/>
            <person name="Vysotskaia V.S."/>
            <person name="Walker M."/>
            <person name="Wu D."/>
            <person name="Yu G."/>
            <person name="Fraser C.M."/>
            <person name="Venter J.C."/>
            <person name="Davis R.W."/>
        </authorList>
    </citation>
    <scope>NUCLEOTIDE SEQUENCE [LARGE SCALE GENOMIC DNA]</scope>
    <source>
        <strain>cv. Columbia</strain>
    </source>
</reference>
<reference key="2">
    <citation type="journal article" date="2017" name="Plant J.">
        <title>Araport11: a complete reannotation of the Arabidopsis thaliana reference genome.</title>
        <authorList>
            <person name="Cheng C.Y."/>
            <person name="Krishnakumar V."/>
            <person name="Chan A.P."/>
            <person name="Thibaud-Nissen F."/>
            <person name="Schobel S."/>
            <person name="Town C.D."/>
        </authorList>
    </citation>
    <scope>GENOME REANNOTATION</scope>
    <source>
        <strain>cv. Columbia</strain>
    </source>
</reference>
<reference key="3">
    <citation type="journal article" date="2003" name="Science">
        <title>Empirical analysis of transcriptional activity in the Arabidopsis genome.</title>
        <authorList>
            <person name="Yamada K."/>
            <person name="Lim J."/>
            <person name="Dale J.M."/>
            <person name="Chen H."/>
            <person name="Shinn P."/>
            <person name="Palm C.J."/>
            <person name="Southwick A.M."/>
            <person name="Wu H.C."/>
            <person name="Kim C.J."/>
            <person name="Nguyen M."/>
            <person name="Pham P.K."/>
            <person name="Cheuk R.F."/>
            <person name="Karlin-Newmann G."/>
            <person name="Liu S.X."/>
            <person name="Lam B."/>
            <person name="Sakano H."/>
            <person name="Wu T."/>
            <person name="Yu G."/>
            <person name="Miranda M."/>
            <person name="Quach H.L."/>
            <person name="Tripp M."/>
            <person name="Chang C.H."/>
            <person name="Lee J.M."/>
            <person name="Toriumi M.J."/>
            <person name="Chan M.M."/>
            <person name="Tang C.C."/>
            <person name="Onodera C.S."/>
            <person name="Deng J.M."/>
            <person name="Akiyama K."/>
            <person name="Ansari Y."/>
            <person name="Arakawa T."/>
            <person name="Banh J."/>
            <person name="Banno F."/>
            <person name="Bowser L."/>
            <person name="Brooks S.Y."/>
            <person name="Carninci P."/>
            <person name="Chao Q."/>
            <person name="Choy N."/>
            <person name="Enju A."/>
            <person name="Goldsmith A.D."/>
            <person name="Gurjal M."/>
            <person name="Hansen N.F."/>
            <person name="Hayashizaki Y."/>
            <person name="Johnson-Hopson C."/>
            <person name="Hsuan V.W."/>
            <person name="Iida K."/>
            <person name="Karnes M."/>
            <person name="Khan S."/>
            <person name="Koesema E."/>
            <person name="Ishida J."/>
            <person name="Jiang P.X."/>
            <person name="Jones T."/>
            <person name="Kawai J."/>
            <person name="Kamiya A."/>
            <person name="Meyers C."/>
            <person name="Nakajima M."/>
            <person name="Narusaka M."/>
            <person name="Seki M."/>
            <person name="Sakurai T."/>
            <person name="Satou M."/>
            <person name="Tamse R."/>
            <person name="Vaysberg M."/>
            <person name="Wallender E.K."/>
            <person name="Wong C."/>
            <person name="Yamamura Y."/>
            <person name="Yuan S."/>
            <person name="Shinozaki K."/>
            <person name="Davis R.W."/>
            <person name="Theologis A."/>
            <person name="Ecker J.R."/>
        </authorList>
    </citation>
    <scope>NUCLEOTIDE SEQUENCE [LARGE SCALE MRNA]</scope>
    <source>
        <strain>cv. Columbia</strain>
    </source>
</reference>
<reference key="4">
    <citation type="journal article" date="2011" name="Plant Physiol.">
        <title>Two ancient bacterial-like PPP family phosphatases from Arabidopsis are highly conserved plant proteins that possess unique properties.</title>
        <authorList>
            <person name="Uhrig R.G."/>
            <person name="Moorhead G.B."/>
        </authorList>
    </citation>
    <scope>FUNCTION</scope>
    <scope>COFACTOR</scope>
    <scope>SUBCELLULAR LOCATION</scope>
    <scope>TISSUE SPECIFICITY</scope>
    <scope>INDUCTION</scope>
    <scope>DISRUPTION PHENOTYPE</scope>
</reference>
<reference key="5">
    <citation type="journal article" date="2012" name="Funct. Integr. Genomics">
        <title>Prediction of biological functions of Shewanella-like protein phosphatases (Shelphs) across different domains of life.</title>
        <authorList>
            <person name="Kutuzov M.A."/>
            <person name="Andreeva A.V."/>
        </authorList>
    </citation>
    <scope>INDUCTION</scope>
</reference>
<name>SLP1_ARATH</name>
<dbReference type="EC" id="3.1.-.-" evidence="5"/>
<dbReference type="EMBL" id="AC067971">
    <property type="protein sequence ID" value="AAF82218.1"/>
    <property type="status" value="ALT_SEQ"/>
    <property type="molecule type" value="Genomic_DNA"/>
</dbReference>
<dbReference type="EMBL" id="CP002684">
    <property type="protein sequence ID" value="AEE28065.1"/>
    <property type="molecule type" value="Genomic_DNA"/>
</dbReference>
<dbReference type="EMBL" id="AY079027">
    <property type="protein sequence ID" value="AAL84981.1"/>
    <property type="molecule type" value="mRNA"/>
</dbReference>
<dbReference type="EMBL" id="AY136428">
    <property type="protein sequence ID" value="AAM97094.1"/>
    <property type="molecule type" value="mRNA"/>
</dbReference>
<dbReference type="EMBL" id="BT008476">
    <property type="protein sequence ID" value="AAP37835.1"/>
    <property type="molecule type" value="mRNA"/>
</dbReference>
<dbReference type="PIR" id="H86204">
    <property type="entry name" value="H86204"/>
</dbReference>
<dbReference type="RefSeq" id="NP_172182.2">
    <molecule id="Q8L774-1"/>
    <property type="nucleotide sequence ID" value="NM_100574.5"/>
</dbReference>
<dbReference type="SMR" id="Q8L774"/>
<dbReference type="FunCoup" id="Q8L774">
    <property type="interactions" value="224"/>
</dbReference>
<dbReference type="IntAct" id="Q8L774">
    <property type="interactions" value="1"/>
</dbReference>
<dbReference type="STRING" id="3702.Q8L774"/>
<dbReference type="PaxDb" id="3702-AT1G07010.3"/>
<dbReference type="ProteomicsDB" id="228441">
    <molecule id="Q8L774-1"/>
</dbReference>
<dbReference type="EnsemblPlants" id="AT1G07010.1">
    <molecule id="Q8L774-1"/>
    <property type="protein sequence ID" value="AT1G07010.1"/>
    <property type="gene ID" value="AT1G07010"/>
</dbReference>
<dbReference type="GeneID" id="837211"/>
<dbReference type="Gramene" id="AT1G07010.1">
    <molecule id="Q8L774-1"/>
    <property type="protein sequence ID" value="AT1G07010.1"/>
    <property type="gene ID" value="AT1G07010"/>
</dbReference>
<dbReference type="KEGG" id="ath:AT1G07010"/>
<dbReference type="Araport" id="AT1G07010"/>
<dbReference type="TAIR" id="AT1G07010">
    <property type="gene designation" value="SLP1"/>
</dbReference>
<dbReference type="eggNOG" id="KOG0374">
    <property type="taxonomic scope" value="Eukaryota"/>
</dbReference>
<dbReference type="HOGENOM" id="CLU_042543_1_0_1"/>
<dbReference type="InParanoid" id="Q8L774"/>
<dbReference type="OMA" id="SHWMRGL"/>
<dbReference type="OrthoDB" id="5976022at2759"/>
<dbReference type="PhylomeDB" id="Q8L774"/>
<dbReference type="PRO" id="PR:Q8L774"/>
<dbReference type="Proteomes" id="UP000006548">
    <property type="component" value="Chromosome 1"/>
</dbReference>
<dbReference type="ExpressionAtlas" id="Q8L774">
    <property type="expression patterns" value="baseline and differential"/>
</dbReference>
<dbReference type="GO" id="GO:0009507">
    <property type="term" value="C:chloroplast"/>
    <property type="evidence" value="ECO:0000314"/>
    <property type="project" value="UniProtKB"/>
</dbReference>
<dbReference type="GO" id="GO:0030145">
    <property type="term" value="F:manganese ion binding"/>
    <property type="evidence" value="ECO:0000314"/>
    <property type="project" value="UniProtKB"/>
</dbReference>
<dbReference type="GO" id="GO:0016791">
    <property type="term" value="F:phosphatase activity"/>
    <property type="evidence" value="ECO:0000314"/>
    <property type="project" value="UniProtKB"/>
</dbReference>
<dbReference type="GO" id="GO:0004721">
    <property type="term" value="F:phosphoprotein phosphatase activity"/>
    <property type="evidence" value="ECO:0007669"/>
    <property type="project" value="UniProtKB-KW"/>
</dbReference>
<dbReference type="CDD" id="cd07425">
    <property type="entry name" value="MPP_Shelphs"/>
    <property type="match status" value="1"/>
</dbReference>
<dbReference type="Gene3D" id="3.60.21.10">
    <property type="match status" value="1"/>
</dbReference>
<dbReference type="InterPro" id="IPR004843">
    <property type="entry name" value="Calcineurin-like_PHP_ApaH"/>
</dbReference>
<dbReference type="InterPro" id="IPR029052">
    <property type="entry name" value="Metallo-depent_PP-like"/>
</dbReference>
<dbReference type="InterPro" id="IPR041787">
    <property type="entry name" value="MPP_Shelphs"/>
</dbReference>
<dbReference type="PANTHER" id="PTHR46546">
    <property type="entry name" value="SHEWANELLA-LIKE PROTEIN PHOSPHATASE 1"/>
    <property type="match status" value="1"/>
</dbReference>
<dbReference type="PANTHER" id="PTHR46546:SF4">
    <property type="entry name" value="SHEWANELLA-LIKE PROTEIN PHOSPHATASE 1"/>
    <property type="match status" value="1"/>
</dbReference>
<dbReference type="Pfam" id="PF00149">
    <property type="entry name" value="Metallophos"/>
    <property type="match status" value="1"/>
</dbReference>
<dbReference type="SUPFAM" id="SSF56300">
    <property type="entry name" value="Metallo-dependent phosphatases"/>
    <property type="match status" value="1"/>
</dbReference>
<proteinExistence type="evidence at protein level"/>
<keyword id="KW-0025">Alternative splicing</keyword>
<keyword id="KW-0150">Chloroplast</keyword>
<keyword id="KW-0378">Hydrolase</keyword>
<keyword id="KW-0464">Manganese</keyword>
<keyword id="KW-0479">Metal-binding</keyword>
<keyword id="KW-0934">Plastid</keyword>
<keyword id="KW-0904">Protein phosphatase</keyword>
<keyword id="KW-1185">Reference proteome</keyword>
<keyword id="KW-0809">Transit peptide</keyword>
<comment type="function">
    <text evidence="3">Shows phosphatase activity, hydrolyzing the artificial substrate para-nitrophenylphosphate (pNPP) in vitro.</text>
</comment>
<comment type="cofactor">
    <cofactor evidence="3">
        <name>Mn(2+)</name>
        <dbReference type="ChEBI" id="CHEBI:29035"/>
    </cofactor>
    <text evidence="1">Binds 2 manganese ions per subunit.</text>
</comment>
<comment type="subcellular location">
    <subcellularLocation>
        <location evidence="3">Plastid</location>
        <location evidence="3">Chloroplast</location>
    </subcellularLocation>
</comment>
<comment type="alternative products">
    <event type="alternative splicing"/>
    <isoform>
        <id>Q8L774-1</id>
        <name>1</name>
        <sequence type="displayed"/>
    </isoform>
    <text evidence="5">A number of isoforms are produced. According to EST sequences.</text>
</comment>
<comment type="tissue specificity">
    <text evidence="3">Expressed in rosettes leaves, shoots and flowers (at protein level).</text>
</comment>
<comment type="induction">
    <text evidence="3 6">Circadian-regulated, with a peak in expression at 8 hours light time on a 12 hours light/dark cycle (at protein level) (PubMed:21976480). Induced by heat shock. Down-regulated by infection with the bacterial pathogen P.syringae (Probable).</text>
</comment>
<comment type="disruption phenotype">
    <text evidence="3">No visible phenotype under normal growth conditions.</text>
</comment>
<comment type="similarity">
    <text evidence="5">Belongs to the metallophosphoesterase superfamily. SLP family.</text>
</comment>
<comment type="sequence caution" evidence="5">
    <conflict type="erroneous gene model prediction">
        <sequence resource="EMBL-CDS" id="AAF82218"/>
    </conflict>
</comment>
<organism>
    <name type="scientific">Arabidopsis thaliana</name>
    <name type="common">Mouse-ear cress</name>
    <dbReference type="NCBI Taxonomy" id="3702"/>
    <lineage>
        <taxon>Eukaryota</taxon>
        <taxon>Viridiplantae</taxon>
        <taxon>Streptophyta</taxon>
        <taxon>Embryophyta</taxon>
        <taxon>Tracheophyta</taxon>
        <taxon>Spermatophyta</taxon>
        <taxon>Magnoliopsida</taxon>
        <taxon>eudicotyledons</taxon>
        <taxon>Gunneridae</taxon>
        <taxon>Pentapetalae</taxon>
        <taxon>rosids</taxon>
        <taxon>malvids</taxon>
        <taxon>Brassicales</taxon>
        <taxon>Brassicaceae</taxon>
        <taxon>Camelineae</taxon>
        <taxon>Arabidopsis</taxon>
    </lineage>
</organism>
<feature type="transit peptide" description="Chloroplast" evidence="2">
    <location>
        <begin position="1"/>
        <end position="53"/>
    </location>
</feature>
<feature type="chain" id="PRO_0000435683" description="Shewanella-like protein phosphatase 1">
    <location>
        <begin position="54"/>
        <end position="389"/>
    </location>
</feature>
<feature type="active site" description="Proton donor" evidence="1">
    <location>
        <position position="138"/>
    </location>
</feature>
<feature type="binding site" evidence="1">
    <location>
        <position position="64"/>
    </location>
    <ligand>
        <name>Mn(2+)</name>
        <dbReference type="ChEBI" id="CHEBI:29035"/>
        <label>1</label>
    </ligand>
</feature>
<feature type="binding site" evidence="1">
    <location>
        <position position="66"/>
    </location>
    <ligand>
        <name>Mn(2+)</name>
        <dbReference type="ChEBI" id="CHEBI:29035"/>
        <label>1</label>
    </ligand>
</feature>
<feature type="binding site" evidence="1">
    <location>
        <position position="102"/>
    </location>
    <ligand>
        <name>Mn(2+)</name>
        <dbReference type="ChEBI" id="CHEBI:29035"/>
        <label>1</label>
    </ligand>
</feature>
<feature type="binding site" evidence="1">
    <location>
        <position position="102"/>
    </location>
    <ligand>
        <name>Mn(2+)</name>
        <dbReference type="ChEBI" id="CHEBI:29035"/>
        <label>2</label>
    </ligand>
</feature>
<feature type="binding site" evidence="1">
    <location>
        <position position="137"/>
    </location>
    <ligand>
        <name>Mn(2+)</name>
        <dbReference type="ChEBI" id="CHEBI:29035"/>
        <label>2</label>
    </ligand>
</feature>
<feature type="binding site" evidence="1">
    <location>
        <position position="242"/>
    </location>
    <ligand>
        <name>Mn(2+)</name>
        <dbReference type="ChEBI" id="CHEBI:29035"/>
        <label>2</label>
    </ligand>
</feature>
<feature type="binding site" evidence="1">
    <location>
        <position position="314"/>
    </location>
    <ligand>
        <name>Mn(2+)</name>
        <dbReference type="ChEBI" id="CHEBI:29035"/>
        <label>2</label>
    </ligand>
</feature>
<feature type="sequence conflict" description="In Ref. 3; AAL84981." evidence="5" ref="3">
    <original>D</original>
    <variation>E</variation>
    <location>
        <position position="109"/>
    </location>
</feature>
<feature type="sequence conflict" description="In Ref. 3; AAL84981." evidence="5" ref="3">
    <original>G</original>
    <variation>E</variation>
    <location>
        <position position="208"/>
    </location>
</feature>
<evidence type="ECO:0000250" key="1">
    <source>
        <dbReference type="UniProtKB" id="P36873"/>
    </source>
</evidence>
<evidence type="ECO:0000255" key="2"/>
<evidence type="ECO:0000269" key="3">
    <source>
    </source>
</evidence>
<evidence type="ECO:0000303" key="4">
    <source>
    </source>
</evidence>
<evidence type="ECO:0000305" key="5"/>
<evidence type="ECO:0000305" key="6">
    <source>
    </source>
</evidence>
<evidence type="ECO:0000312" key="7">
    <source>
        <dbReference type="Araport" id="AT1G07010"/>
    </source>
</evidence>
<evidence type="ECO:0000312" key="8">
    <source>
        <dbReference type="EMBL" id="AAF82218.1"/>
    </source>
</evidence>